<name>HTPX_ENT38</name>
<proteinExistence type="inferred from homology"/>
<evidence type="ECO:0000255" key="1">
    <source>
        <dbReference type="HAMAP-Rule" id="MF_00188"/>
    </source>
</evidence>
<comment type="cofactor">
    <cofactor evidence="1">
        <name>Zn(2+)</name>
        <dbReference type="ChEBI" id="CHEBI:29105"/>
    </cofactor>
    <text evidence="1">Binds 1 zinc ion per subunit.</text>
</comment>
<comment type="subcellular location">
    <subcellularLocation>
        <location evidence="1">Cell inner membrane</location>
        <topology evidence="1">Multi-pass membrane protein</topology>
    </subcellularLocation>
</comment>
<comment type="similarity">
    <text evidence="1">Belongs to the peptidase M48B family.</text>
</comment>
<reference key="1">
    <citation type="journal article" date="2010" name="PLoS Genet.">
        <title>Genome sequence of the plant growth promoting endophytic bacterium Enterobacter sp. 638.</title>
        <authorList>
            <person name="Taghavi S."/>
            <person name="van der Lelie D."/>
            <person name="Hoffman A."/>
            <person name="Zhang Y.B."/>
            <person name="Walla M.D."/>
            <person name="Vangronsveld J."/>
            <person name="Newman L."/>
            <person name="Monchy S."/>
        </authorList>
    </citation>
    <scope>NUCLEOTIDE SEQUENCE [LARGE SCALE GENOMIC DNA]</scope>
    <source>
        <strain>638</strain>
    </source>
</reference>
<gene>
    <name evidence="1" type="primary">htpX</name>
    <name type="ordered locus">Ent638_2399</name>
</gene>
<protein>
    <recommendedName>
        <fullName evidence="1">Protease HtpX</fullName>
        <ecNumber evidence="1">3.4.24.-</ecNumber>
    </recommendedName>
    <alternativeName>
        <fullName evidence="1">Heat shock protein HtpX</fullName>
    </alternativeName>
</protein>
<feature type="chain" id="PRO_1000058464" description="Protease HtpX">
    <location>
        <begin position="1"/>
        <end position="293"/>
    </location>
</feature>
<feature type="transmembrane region" description="Helical" evidence="1">
    <location>
        <begin position="4"/>
        <end position="24"/>
    </location>
</feature>
<feature type="transmembrane region" description="Helical" evidence="1">
    <location>
        <begin position="34"/>
        <end position="54"/>
    </location>
</feature>
<feature type="transmembrane region" description="Helical" evidence="1">
    <location>
        <begin position="158"/>
        <end position="178"/>
    </location>
</feature>
<feature type="transmembrane region" description="Helical" evidence="1">
    <location>
        <begin position="193"/>
        <end position="213"/>
    </location>
</feature>
<feature type="active site" evidence="1">
    <location>
        <position position="140"/>
    </location>
</feature>
<feature type="binding site" evidence="1">
    <location>
        <position position="139"/>
    </location>
    <ligand>
        <name>Zn(2+)</name>
        <dbReference type="ChEBI" id="CHEBI:29105"/>
        <note>catalytic</note>
    </ligand>
</feature>
<feature type="binding site" evidence="1">
    <location>
        <position position="143"/>
    </location>
    <ligand>
        <name>Zn(2+)</name>
        <dbReference type="ChEBI" id="CHEBI:29105"/>
        <note>catalytic</note>
    </ligand>
</feature>
<feature type="binding site" evidence="1">
    <location>
        <position position="222"/>
    </location>
    <ligand>
        <name>Zn(2+)</name>
        <dbReference type="ChEBI" id="CHEBI:29105"/>
        <note>catalytic</note>
    </ligand>
</feature>
<sequence>MMRIALFLLTNLAVMVVFGLVLSLTGIQSSSVQGLLIMALLFGFGGSFISLLMSKWMALKSVGGEVIEQPRNDMEHWLMNTVAQQSRQAGIKMPQVAIYHAPDINAFATGARRDASLVAVSTGLLQNMSRDEAEAVIAHEISHIANGDMVTMTLIQGVVNTFVIFISRILAQIAAGFMGGNRDEGEGNNGNPLIYFAVAMVLELVFGILASIITMWFSRHREFHADAGSAKLVGREKMIAALQRLKTSYEPQEATSMMAFCINGKSKSLSEMFMTHPPLDKRIEALRSGQYIK</sequence>
<organism>
    <name type="scientific">Enterobacter sp. (strain 638)</name>
    <dbReference type="NCBI Taxonomy" id="399742"/>
    <lineage>
        <taxon>Bacteria</taxon>
        <taxon>Pseudomonadati</taxon>
        <taxon>Pseudomonadota</taxon>
        <taxon>Gammaproteobacteria</taxon>
        <taxon>Enterobacterales</taxon>
        <taxon>Enterobacteriaceae</taxon>
        <taxon>Enterobacter</taxon>
    </lineage>
</organism>
<keyword id="KW-0997">Cell inner membrane</keyword>
<keyword id="KW-1003">Cell membrane</keyword>
<keyword id="KW-0378">Hydrolase</keyword>
<keyword id="KW-0472">Membrane</keyword>
<keyword id="KW-0479">Metal-binding</keyword>
<keyword id="KW-0482">Metalloprotease</keyword>
<keyword id="KW-0645">Protease</keyword>
<keyword id="KW-0812">Transmembrane</keyword>
<keyword id="KW-1133">Transmembrane helix</keyword>
<keyword id="KW-0862">Zinc</keyword>
<accession>A4WBI8</accession>
<dbReference type="EC" id="3.4.24.-" evidence="1"/>
<dbReference type="EMBL" id="CP000653">
    <property type="protein sequence ID" value="ABP61068.1"/>
    <property type="molecule type" value="Genomic_DNA"/>
</dbReference>
<dbReference type="RefSeq" id="WP_015959401.1">
    <property type="nucleotide sequence ID" value="NC_009436.1"/>
</dbReference>
<dbReference type="SMR" id="A4WBI8"/>
<dbReference type="STRING" id="399742.Ent638_2399"/>
<dbReference type="MEROPS" id="M48.002"/>
<dbReference type="GeneID" id="93309555"/>
<dbReference type="KEGG" id="ent:Ent638_2399"/>
<dbReference type="eggNOG" id="COG0501">
    <property type="taxonomic scope" value="Bacteria"/>
</dbReference>
<dbReference type="HOGENOM" id="CLU_042266_1_0_6"/>
<dbReference type="OrthoDB" id="15218at2"/>
<dbReference type="Proteomes" id="UP000000230">
    <property type="component" value="Chromosome"/>
</dbReference>
<dbReference type="GO" id="GO:0005886">
    <property type="term" value="C:plasma membrane"/>
    <property type="evidence" value="ECO:0007669"/>
    <property type="project" value="UniProtKB-SubCell"/>
</dbReference>
<dbReference type="GO" id="GO:0004222">
    <property type="term" value="F:metalloendopeptidase activity"/>
    <property type="evidence" value="ECO:0007669"/>
    <property type="project" value="UniProtKB-UniRule"/>
</dbReference>
<dbReference type="GO" id="GO:0008270">
    <property type="term" value="F:zinc ion binding"/>
    <property type="evidence" value="ECO:0007669"/>
    <property type="project" value="UniProtKB-UniRule"/>
</dbReference>
<dbReference type="GO" id="GO:0006508">
    <property type="term" value="P:proteolysis"/>
    <property type="evidence" value="ECO:0007669"/>
    <property type="project" value="UniProtKB-KW"/>
</dbReference>
<dbReference type="CDD" id="cd07335">
    <property type="entry name" value="M48B_HtpX_like"/>
    <property type="match status" value="1"/>
</dbReference>
<dbReference type="FunFam" id="3.30.2010.10:FF:000001">
    <property type="entry name" value="Protease HtpX"/>
    <property type="match status" value="1"/>
</dbReference>
<dbReference type="Gene3D" id="3.30.2010.10">
    <property type="entry name" value="Metalloproteases ('zincins'), catalytic domain"/>
    <property type="match status" value="1"/>
</dbReference>
<dbReference type="HAMAP" id="MF_00188">
    <property type="entry name" value="Pept_M48_protease_HtpX"/>
    <property type="match status" value="1"/>
</dbReference>
<dbReference type="InterPro" id="IPR050083">
    <property type="entry name" value="HtpX_protease"/>
</dbReference>
<dbReference type="InterPro" id="IPR022919">
    <property type="entry name" value="Pept_M48_protease_HtpX"/>
</dbReference>
<dbReference type="InterPro" id="IPR001915">
    <property type="entry name" value="Peptidase_M48"/>
</dbReference>
<dbReference type="NCBIfam" id="NF003965">
    <property type="entry name" value="PRK05457.1"/>
    <property type="match status" value="1"/>
</dbReference>
<dbReference type="PANTHER" id="PTHR43221">
    <property type="entry name" value="PROTEASE HTPX"/>
    <property type="match status" value="1"/>
</dbReference>
<dbReference type="PANTHER" id="PTHR43221:SF1">
    <property type="entry name" value="PROTEASE HTPX"/>
    <property type="match status" value="1"/>
</dbReference>
<dbReference type="Pfam" id="PF01435">
    <property type="entry name" value="Peptidase_M48"/>
    <property type="match status" value="1"/>
</dbReference>